<accession>Q5U2N3</accession>
<proteinExistence type="evidence at protein level"/>
<organism>
    <name type="scientific">Rattus norvegicus</name>
    <name type="common">Rat</name>
    <dbReference type="NCBI Taxonomy" id="10116"/>
    <lineage>
        <taxon>Eukaryota</taxon>
        <taxon>Metazoa</taxon>
        <taxon>Chordata</taxon>
        <taxon>Craniata</taxon>
        <taxon>Vertebrata</taxon>
        <taxon>Euteleostomi</taxon>
        <taxon>Mammalia</taxon>
        <taxon>Eutheria</taxon>
        <taxon>Euarchontoglires</taxon>
        <taxon>Glires</taxon>
        <taxon>Rodentia</taxon>
        <taxon>Myomorpha</taxon>
        <taxon>Muroidea</taxon>
        <taxon>Muridae</taxon>
        <taxon>Murinae</taxon>
        <taxon>Rattus</taxon>
    </lineage>
</organism>
<evidence type="ECO:0000250" key="1"/>
<evidence type="ECO:0000250" key="2">
    <source>
        <dbReference type="UniProtKB" id="O00562"/>
    </source>
</evidence>
<evidence type="ECO:0000250" key="3">
    <source>
        <dbReference type="UniProtKB" id="O35954"/>
    </source>
</evidence>
<evidence type="ECO:0000255" key="4">
    <source>
        <dbReference type="PROSITE-ProRule" id="PRU00378"/>
    </source>
</evidence>
<evidence type="ECO:0000256" key="5">
    <source>
        <dbReference type="SAM" id="MobiDB-lite"/>
    </source>
</evidence>
<evidence type="ECO:0000305" key="6"/>
<evidence type="ECO:0007744" key="7">
    <source>
    </source>
</evidence>
<reference key="1">
    <citation type="journal article" date="2004" name="Genome Res.">
        <title>The status, quality, and expansion of the NIH full-length cDNA project: the Mammalian Gene Collection (MGC).</title>
        <authorList>
            <consortium name="The MGC Project Team"/>
        </authorList>
    </citation>
    <scope>NUCLEOTIDE SEQUENCE [LARGE SCALE MRNA]</scope>
    <source>
        <tissue>Kidney</tissue>
    </source>
</reference>
<reference key="2">
    <citation type="journal article" date="2012" name="Nat. Commun.">
        <title>Quantitative maps of protein phosphorylation sites across 14 different rat organs and tissues.</title>
        <authorList>
            <person name="Lundby A."/>
            <person name="Secher A."/>
            <person name="Lage K."/>
            <person name="Nordsborg N.B."/>
            <person name="Dmytriyev A."/>
            <person name="Lundby C."/>
            <person name="Olsen J.V."/>
        </authorList>
    </citation>
    <scope>PHOSPHORYLATION [LARGE SCALE ANALYSIS] AT THR-287; SER-300; SER-304; SER-342; SER-345; SER-346; SER-373; SER-593; SER-600 AND SER-621</scope>
    <scope>IDENTIFICATION BY MASS SPECTROMETRY [LARGE SCALE ANALYSIS]</scope>
</reference>
<gene>
    <name type="primary">Pitpnm1</name>
    <name type="synonym">Nir2</name>
    <name type="synonym">Pitpnm</name>
</gene>
<name>PITM1_RAT</name>
<protein>
    <recommendedName>
        <fullName>Membrane-associated phosphatidylinositol transfer protein 1</fullName>
    </recommendedName>
    <alternativeName>
        <fullName>Phosphatidylinositol transfer protein, membrane-associated 1</fullName>
        <shortName>PITPnm 1</shortName>
    </alternativeName>
    <alternativeName>
        <fullName>Pyk2 N-terminal domain-interacting receptor 2</fullName>
        <shortName>NIR-2</shortName>
    </alternativeName>
</protein>
<comment type="function">
    <text evidence="2">Catalyzes the transfer of phosphatidylinositol (PI) between membranes (By similarity). Binds PI, phosphatidylcholine (PC) and phosphatidic acid (PA) with the binding affinity order of PI &gt; PA &gt; PC (By similarity). Regulates RHOA activity, and plays a role in cytoskeleton remodeling (By similarity). Necessary for normal completion of cytokinesis (By similarity). Plays a role in maintaining normal diacylglycerol levels in the Golgi apparatus (By similarity). Necessary for maintaining the normal structure of the endoplasmic reticulum and the Golgi apparatus (By similarity). Required for protein export from the endoplasmic reticulum and the Golgi (By similarity). Binds calcium ions (By similarity).</text>
</comment>
<comment type="catalytic activity">
    <reaction evidence="2">
        <text>a 1,2-diacyl-sn-glycero-3-phospho-(1D-myo-inositol)(in) = a 1,2-diacyl-sn-glycero-3-phospho-(1D-myo-inositol)(out)</text>
        <dbReference type="Rhea" id="RHEA:38691"/>
        <dbReference type="ChEBI" id="CHEBI:57880"/>
    </reaction>
    <physiologicalReaction direction="left-to-right" evidence="2">
        <dbReference type="Rhea" id="RHEA:38692"/>
    </physiologicalReaction>
</comment>
<comment type="subunit">
    <text evidence="1">Interacts with PIK4CA and VAPB. Interacts with PTK2B via its C-terminus. Interacts with RHOA. Has higher affinity for the inactive, GDP-bound form of RHOA. The CDK1-phosphorylated form interacts with PLK1 (By similarity).</text>
</comment>
<comment type="subcellular location">
    <subcellularLocation>
        <location evidence="2">Cytoplasm</location>
    </subcellularLocation>
    <subcellularLocation>
        <location evidence="2">Golgi apparatus</location>
        <location evidence="2">Golgi stack membrane</location>
        <topology evidence="2">Peripheral membrane protein</topology>
    </subcellularLocation>
    <subcellularLocation>
        <location evidence="2">Endoplasmic reticulum membrane</location>
        <topology evidence="2">Peripheral membrane protein</topology>
    </subcellularLocation>
    <subcellularLocation>
        <location evidence="2">Lipid droplet</location>
    </subcellularLocation>
    <subcellularLocation>
        <location evidence="2">Cleavage furrow</location>
    </subcellularLocation>
    <subcellularLocation>
        <location evidence="2">Midbody</location>
    </subcellularLocation>
    <text evidence="2">Peripheral membrane protein associated with Golgi stacks in interphase cells. A minor proportion is associated with the endoplasmic reticulum. Associated with lipid droplets. Dissociates from the Golgi early on in mitosis and localizes to the cleavage furrow and midbody during cytokinesis.</text>
</comment>
<comment type="PTM">
    <text evidence="1">Phosphorylated on multiple sites by CDK1 at the onset of mitosis. Phosphorylation facilitates dissociation from the Golgi complex and is required for interaction with PLK1 (By similarity).</text>
</comment>
<comment type="PTM">
    <text evidence="1">Phosphorylated on threonine residues upon treatment with oleic acid.</text>
</comment>
<comment type="PTM">
    <text evidence="1">Phosphorylated on tyrosine residues by PTK2B.</text>
</comment>
<comment type="similarity">
    <text evidence="6">Belongs to the PtdIns transfer protein family. PI transfer class IIA subfamily.</text>
</comment>
<keyword id="KW-0106">Calcium</keyword>
<keyword id="KW-0963">Cytoplasm</keyword>
<keyword id="KW-0256">Endoplasmic reticulum</keyword>
<keyword id="KW-0333">Golgi apparatus</keyword>
<keyword id="KW-0551">Lipid droplet</keyword>
<keyword id="KW-0472">Membrane</keyword>
<keyword id="KW-0479">Metal-binding</keyword>
<keyword id="KW-0488">Methylation</keyword>
<keyword id="KW-0597">Phosphoprotein</keyword>
<keyword id="KW-0653">Protein transport</keyword>
<keyword id="KW-1185">Reference proteome</keyword>
<keyword id="KW-0813">Transport</keyword>
<dbReference type="EMBL" id="BC085945">
    <property type="protein sequence ID" value="AAH85945.1"/>
    <property type="molecule type" value="mRNA"/>
</dbReference>
<dbReference type="RefSeq" id="NP_001008370.1">
    <property type="nucleotide sequence ID" value="NM_001008369.1"/>
</dbReference>
<dbReference type="SMR" id="Q5U2N3"/>
<dbReference type="BioGRID" id="262881">
    <property type="interactions" value="1"/>
</dbReference>
<dbReference type="FunCoup" id="Q5U2N3">
    <property type="interactions" value="1531"/>
</dbReference>
<dbReference type="STRING" id="10116.ENSRNOP00000025084"/>
<dbReference type="iPTMnet" id="Q5U2N3"/>
<dbReference type="PhosphoSitePlus" id="Q5U2N3"/>
<dbReference type="PaxDb" id="10116-ENSRNOP00000025084"/>
<dbReference type="Ensembl" id="ENSRNOT00000025084.5">
    <property type="protein sequence ID" value="ENSRNOP00000025084.3"/>
    <property type="gene ID" value="ENSRNOG00000018553.5"/>
</dbReference>
<dbReference type="GeneID" id="361694"/>
<dbReference type="KEGG" id="rno:361694"/>
<dbReference type="UCSC" id="RGD:1306710">
    <property type="organism name" value="rat"/>
</dbReference>
<dbReference type="AGR" id="RGD:1306710"/>
<dbReference type="CTD" id="9600"/>
<dbReference type="RGD" id="1306710">
    <property type="gene designation" value="Pitpnm1"/>
</dbReference>
<dbReference type="eggNOG" id="KOG3668">
    <property type="taxonomic scope" value="Eukaryota"/>
</dbReference>
<dbReference type="GeneTree" id="ENSGT00940000161522"/>
<dbReference type="HOGENOM" id="CLU_007179_0_0_1"/>
<dbReference type="InParanoid" id="Q5U2N3"/>
<dbReference type="PhylomeDB" id="Q5U2N3"/>
<dbReference type="TreeFam" id="TF312967"/>
<dbReference type="Reactome" id="R-RNO-1483226">
    <property type="pathway name" value="Synthesis of PI"/>
</dbReference>
<dbReference type="PRO" id="PR:Q5U2N3"/>
<dbReference type="Proteomes" id="UP000002494">
    <property type="component" value="Chromosome 1"/>
</dbReference>
<dbReference type="Bgee" id="ENSRNOG00000018553">
    <property type="expression patterns" value="Expressed in frontal cortex and 19 other cell types or tissues"/>
</dbReference>
<dbReference type="GO" id="GO:0044297">
    <property type="term" value="C:cell body"/>
    <property type="evidence" value="ECO:0000314"/>
    <property type="project" value="UniProtKB"/>
</dbReference>
<dbReference type="GO" id="GO:0032154">
    <property type="term" value="C:cleavage furrow"/>
    <property type="evidence" value="ECO:0007669"/>
    <property type="project" value="UniProtKB-SubCell"/>
</dbReference>
<dbReference type="GO" id="GO:0005737">
    <property type="term" value="C:cytoplasm"/>
    <property type="evidence" value="ECO:0000318"/>
    <property type="project" value="GO_Central"/>
</dbReference>
<dbReference type="GO" id="GO:0005789">
    <property type="term" value="C:endoplasmic reticulum membrane"/>
    <property type="evidence" value="ECO:0007669"/>
    <property type="project" value="UniProtKB-SubCell"/>
</dbReference>
<dbReference type="GO" id="GO:0032580">
    <property type="term" value="C:Golgi cisterna membrane"/>
    <property type="evidence" value="ECO:0007669"/>
    <property type="project" value="UniProtKB-SubCell"/>
</dbReference>
<dbReference type="GO" id="GO:0005811">
    <property type="term" value="C:lipid droplet"/>
    <property type="evidence" value="ECO:0007669"/>
    <property type="project" value="UniProtKB-SubCell"/>
</dbReference>
<dbReference type="GO" id="GO:0030496">
    <property type="term" value="C:midbody"/>
    <property type="evidence" value="ECO:0007669"/>
    <property type="project" value="UniProtKB-SubCell"/>
</dbReference>
<dbReference type="GO" id="GO:0005509">
    <property type="term" value="F:calcium ion binding"/>
    <property type="evidence" value="ECO:0000266"/>
    <property type="project" value="RGD"/>
</dbReference>
<dbReference type="GO" id="GO:0070300">
    <property type="term" value="F:phosphatidic acid binding"/>
    <property type="evidence" value="ECO:0000266"/>
    <property type="project" value="RGD"/>
</dbReference>
<dbReference type="GO" id="GO:0031210">
    <property type="term" value="F:phosphatidylcholine binding"/>
    <property type="evidence" value="ECO:0000266"/>
    <property type="project" value="RGD"/>
</dbReference>
<dbReference type="GO" id="GO:0008525">
    <property type="term" value="F:phosphatidylcholine transporter activity"/>
    <property type="evidence" value="ECO:0000318"/>
    <property type="project" value="GO_Central"/>
</dbReference>
<dbReference type="GO" id="GO:0035091">
    <property type="term" value="F:phosphatidylinositol binding"/>
    <property type="evidence" value="ECO:0000266"/>
    <property type="project" value="RGD"/>
</dbReference>
<dbReference type="GO" id="GO:0008526">
    <property type="term" value="F:phosphatidylinositol transfer activity"/>
    <property type="evidence" value="ECO:0000250"/>
    <property type="project" value="UniProtKB"/>
</dbReference>
<dbReference type="GO" id="GO:0030971">
    <property type="term" value="F:receptor tyrosine kinase binding"/>
    <property type="evidence" value="ECO:0000266"/>
    <property type="project" value="RGD"/>
</dbReference>
<dbReference type="GO" id="GO:0015914">
    <property type="term" value="P:phospholipid transport"/>
    <property type="evidence" value="ECO:0000266"/>
    <property type="project" value="RGD"/>
</dbReference>
<dbReference type="GO" id="GO:0015031">
    <property type="term" value="P:protein transport"/>
    <property type="evidence" value="ECO:0007669"/>
    <property type="project" value="UniProtKB-KW"/>
</dbReference>
<dbReference type="CDD" id="cd08889">
    <property type="entry name" value="SRPBCC_PITPNM1-2_like"/>
    <property type="match status" value="1"/>
</dbReference>
<dbReference type="FunFam" id="3.40.50.1000:FF:000173">
    <property type="entry name" value="Membrane-associated phosphatidylinositol transfer protein 2"/>
    <property type="match status" value="1"/>
</dbReference>
<dbReference type="FunFam" id="3.30.530.20:FF:000001">
    <property type="entry name" value="Phosphatidylinositol transfer protein membrane associated 2"/>
    <property type="match status" value="1"/>
</dbReference>
<dbReference type="Gene3D" id="3.30.530.20">
    <property type="match status" value="1"/>
</dbReference>
<dbReference type="Gene3D" id="3.40.50.1000">
    <property type="entry name" value="HAD superfamily/HAD-like"/>
    <property type="match status" value="1"/>
</dbReference>
<dbReference type="InterPro" id="IPR004177">
    <property type="entry name" value="DDHD_dom"/>
</dbReference>
<dbReference type="InterPro" id="IPR036412">
    <property type="entry name" value="HAD-like_sf"/>
</dbReference>
<dbReference type="InterPro" id="IPR023214">
    <property type="entry name" value="HAD_sf"/>
</dbReference>
<dbReference type="InterPro" id="IPR031315">
    <property type="entry name" value="LNS2/PITP"/>
</dbReference>
<dbReference type="InterPro" id="IPR001666">
    <property type="entry name" value="PI_transfer"/>
</dbReference>
<dbReference type="InterPro" id="IPR055261">
    <property type="entry name" value="PI_transfer_N"/>
</dbReference>
<dbReference type="InterPro" id="IPR023393">
    <property type="entry name" value="START-like_dom_sf"/>
</dbReference>
<dbReference type="PANTHER" id="PTHR10658:SF40">
    <property type="entry name" value="MEMBRANE-ASSOCIATED PHOSPHATIDYLINOSITOL TRANSFER PROTEIN 1"/>
    <property type="match status" value="1"/>
</dbReference>
<dbReference type="PANTHER" id="PTHR10658">
    <property type="entry name" value="PHOSPHATIDYLINOSITOL TRANSFER PROTEIN"/>
    <property type="match status" value="1"/>
</dbReference>
<dbReference type="Pfam" id="PF02862">
    <property type="entry name" value="DDHD"/>
    <property type="match status" value="2"/>
</dbReference>
<dbReference type="Pfam" id="PF02121">
    <property type="entry name" value="IP_trans"/>
    <property type="match status" value="1"/>
</dbReference>
<dbReference type="Pfam" id="PF24694">
    <property type="entry name" value="LNS2_PITM1-3"/>
    <property type="match status" value="1"/>
</dbReference>
<dbReference type="Pfam" id="PF24695">
    <property type="entry name" value="PITM1-3"/>
    <property type="match status" value="1"/>
</dbReference>
<dbReference type="PRINTS" id="PR00391">
    <property type="entry name" value="PITRANSFER"/>
</dbReference>
<dbReference type="SMART" id="SM01127">
    <property type="entry name" value="DDHD"/>
    <property type="match status" value="1"/>
</dbReference>
<dbReference type="SMART" id="SM00775">
    <property type="entry name" value="LNS2"/>
    <property type="match status" value="1"/>
</dbReference>
<dbReference type="SUPFAM" id="SSF55961">
    <property type="entry name" value="Bet v1-like"/>
    <property type="match status" value="1"/>
</dbReference>
<dbReference type="SUPFAM" id="SSF56784">
    <property type="entry name" value="HAD-like"/>
    <property type="match status" value="1"/>
</dbReference>
<dbReference type="PROSITE" id="PS51043">
    <property type="entry name" value="DDHD"/>
    <property type="match status" value="1"/>
</dbReference>
<feature type="chain" id="PRO_0000232740" description="Membrane-associated phosphatidylinositol transfer protein 1">
    <location>
        <begin position="1"/>
        <end position="1242"/>
    </location>
</feature>
<feature type="domain" description="DDHD" evidence="4">
    <location>
        <begin position="684"/>
        <end position="878"/>
    </location>
</feature>
<feature type="region of interest" description="Disordered" evidence="5">
    <location>
        <begin position="259"/>
        <end position="330"/>
    </location>
</feature>
<feature type="region of interest" description="Disordered" evidence="5">
    <location>
        <begin position="581"/>
        <end position="678"/>
    </location>
</feature>
<feature type="region of interest" description="Disordered" evidence="5">
    <location>
        <begin position="1207"/>
        <end position="1242"/>
    </location>
</feature>
<feature type="compositionally biased region" description="Polar residues" evidence="5">
    <location>
        <begin position="272"/>
        <end position="282"/>
    </location>
</feature>
<feature type="compositionally biased region" description="Low complexity" evidence="5">
    <location>
        <begin position="299"/>
        <end position="319"/>
    </location>
</feature>
<feature type="compositionally biased region" description="Low complexity" evidence="5">
    <location>
        <begin position="581"/>
        <end position="593"/>
    </location>
</feature>
<feature type="compositionally biased region" description="Polar residues" evidence="5">
    <location>
        <begin position="643"/>
        <end position="656"/>
    </location>
</feature>
<feature type="modified residue" description="Phosphothreonine" evidence="2">
    <location>
        <position position="59"/>
    </location>
</feature>
<feature type="modified residue" description="Phosphothreonine" evidence="3">
    <location>
        <position position="282"/>
    </location>
</feature>
<feature type="modified residue" description="Phosphothreonine" evidence="7">
    <location>
        <position position="287"/>
    </location>
</feature>
<feature type="modified residue" description="Phosphoserine" evidence="7">
    <location>
        <position position="300"/>
    </location>
</feature>
<feature type="modified residue" description="Phosphoserine" evidence="7">
    <location>
        <position position="304"/>
    </location>
</feature>
<feature type="modified residue" description="Phosphoserine" evidence="3">
    <location>
        <position position="319"/>
    </location>
</feature>
<feature type="modified residue" description="Phosphoserine" evidence="3">
    <location>
        <position position="326"/>
    </location>
</feature>
<feature type="modified residue" description="Phosphoserine" evidence="3">
    <location>
        <position position="329"/>
    </location>
</feature>
<feature type="modified residue" description="Phosphoserine" evidence="7">
    <location>
        <position position="342"/>
    </location>
</feature>
<feature type="modified residue" description="Phosphoserine" evidence="7">
    <location>
        <position position="345"/>
    </location>
</feature>
<feature type="modified residue" description="Phosphoserine" evidence="7">
    <location>
        <position position="346"/>
    </location>
</feature>
<feature type="modified residue" description="Phosphoserine" evidence="7">
    <location>
        <position position="373"/>
    </location>
</feature>
<feature type="modified residue" description="Phosphoserine; by CDK1" evidence="2">
    <location>
        <position position="382"/>
    </location>
</feature>
<feature type="modified residue" description="Phosphoserine" evidence="7">
    <location>
        <position position="593"/>
    </location>
</feature>
<feature type="modified residue" description="Phosphoserine" evidence="7">
    <location>
        <position position="600"/>
    </location>
</feature>
<feature type="modified residue" description="Phosphoserine" evidence="7">
    <location>
        <position position="621"/>
    </location>
</feature>
<feature type="modified residue" description="Phosphoserine" evidence="2">
    <location>
        <position position="894"/>
    </location>
</feature>
<feature type="modified residue" description="Omega-N-methylarginine" evidence="3">
    <location>
        <position position="1209"/>
    </location>
</feature>
<feature type="modified residue" description="Phosphoserine" evidence="2">
    <location>
        <position position="1235"/>
    </location>
</feature>
<sequence length="1242" mass="134984">MLIKEYHILLPMSLDEYQVAQLYMIQKKSREESSGEGSGVEILANRPYTDGPGGNGQYTHKVYHVGSHIPGWFRALLPKAALQVEEESWNAYPYTRTRYTCPFVEKFSIEIETYYLPDGGQQPNVFNLSGAERRQRILDTIDIVRDAVAPGEYKAEEDPRLYRSVKTGRGPLADDWARTAAQTGPLMCAYKLCKVEFRYWGMQAKIEQFIHDVGLRRVMLRAHRQAWCWQDEWIELSMADIRALEEETARMLAQRMAKCNTGSEGPEAQTPGKPSTETQPGTRTAGTPDGPEAPPGPDASPDASFGKQWSSSSRSSYSSQHGGGVSPQSLSEWRMQNIARDSENSSEEEFFDAHEGFSDSDEVFPKEMTKWNSNDFIDAFASPTEVEGVPDPAIMATKGIEDEARAPRDSEGLDGTGDLGVEACSVHALFLILHSGSILDSGPGDTNSKQADVQTLSTAFEAVTRVHFPEALGHVALRLVPCPPICAAAYALVSNLSPYSHDGDSLSRSQDHIPLAALPLLATSSSRYQGAVATVIARTNQAYAAFLRSSEGTGFCGQVVLIGDGVGGILGFDALCHSASAGTGSRGSSRRGSMNNEMLSPEVGPVRDPLADGVEVLGRASPEPSALPAQRTSSDMANPDPDGSQNSLQVAPTVTSGEPRRASTASCPPASSEAPDGPTNAARLDFKVSGFFLFGSPLGLVLALRKTVMPALEVAQMRPACEQIYNLFHAADPCASRLEPLLAPKFQAIAPLAVPRYQKFPLGDGSSLLLADTLQTHSSLFLEELEMMVPSTPTSASGAFWKGNELGNEPAAQPAAPSTTSEVVKILDRWWGNKRIDYSLYCPEALTAFPTVTLPHLFHASYWESADVVAFILRQVIEKERPQLTECEEPSIYSPAFPREKWQRKRTQVKIRNVTSNHRASDTVVCEGRPQVLNGRFMYGPLDVVTLTGEKVDVYVMTQPLSGKWIHFGTEVTNSSGRLTFPVPSERALGIGVYPVRMVVRGDHTYAECCLTVVSRGTEAVVFSIDGSFTASVSIMGSDPKVRAGAVDVVRHWQDSGYLIVYVTGRPDMQKHRVVAWLSQHNFPHGVVSFCDGLTHDPLRQKAMFLQSLVQEVELNIVAGYGSPKDVAVYAALGLSPSQTYIVGRAVRKLQAQCQFLSDGYVAHLGQLEAGSHSHAPSGPPRAALAKSSYAVAAPVDFLRKQSQLLRSRGPSQVDLEGPGTPPTTLARGKTRSISLKLDSEE</sequence>